<evidence type="ECO:0000255" key="1">
    <source>
        <dbReference type="HAMAP-Rule" id="MF_00004"/>
    </source>
</evidence>
<dbReference type="EC" id="2.4.2.7" evidence="1"/>
<dbReference type="EMBL" id="AM295007">
    <property type="protein sequence ID" value="CAM30405.1"/>
    <property type="molecule type" value="Genomic_DNA"/>
</dbReference>
<dbReference type="RefSeq" id="WP_002984891.1">
    <property type="nucleotide sequence ID" value="NC_009332.1"/>
</dbReference>
<dbReference type="SMR" id="A2REX9"/>
<dbReference type="KEGG" id="spf:SpyM51079"/>
<dbReference type="HOGENOM" id="CLU_063339_3_0_9"/>
<dbReference type="UniPathway" id="UPA00588">
    <property type="reaction ID" value="UER00646"/>
</dbReference>
<dbReference type="GO" id="GO:0005737">
    <property type="term" value="C:cytoplasm"/>
    <property type="evidence" value="ECO:0007669"/>
    <property type="project" value="UniProtKB-SubCell"/>
</dbReference>
<dbReference type="GO" id="GO:0002055">
    <property type="term" value="F:adenine binding"/>
    <property type="evidence" value="ECO:0007669"/>
    <property type="project" value="TreeGrafter"/>
</dbReference>
<dbReference type="GO" id="GO:0003999">
    <property type="term" value="F:adenine phosphoribosyltransferase activity"/>
    <property type="evidence" value="ECO:0007669"/>
    <property type="project" value="UniProtKB-UniRule"/>
</dbReference>
<dbReference type="GO" id="GO:0016208">
    <property type="term" value="F:AMP binding"/>
    <property type="evidence" value="ECO:0007669"/>
    <property type="project" value="TreeGrafter"/>
</dbReference>
<dbReference type="GO" id="GO:0006168">
    <property type="term" value="P:adenine salvage"/>
    <property type="evidence" value="ECO:0007669"/>
    <property type="project" value="InterPro"/>
</dbReference>
<dbReference type="GO" id="GO:0044209">
    <property type="term" value="P:AMP salvage"/>
    <property type="evidence" value="ECO:0007669"/>
    <property type="project" value="UniProtKB-UniRule"/>
</dbReference>
<dbReference type="GO" id="GO:0006166">
    <property type="term" value="P:purine ribonucleoside salvage"/>
    <property type="evidence" value="ECO:0007669"/>
    <property type="project" value="UniProtKB-KW"/>
</dbReference>
<dbReference type="CDD" id="cd06223">
    <property type="entry name" value="PRTases_typeI"/>
    <property type="match status" value="1"/>
</dbReference>
<dbReference type="FunFam" id="3.40.50.2020:FF:000004">
    <property type="entry name" value="Adenine phosphoribosyltransferase"/>
    <property type="match status" value="1"/>
</dbReference>
<dbReference type="Gene3D" id="3.40.50.2020">
    <property type="match status" value="1"/>
</dbReference>
<dbReference type="HAMAP" id="MF_00004">
    <property type="entry name" value="Aden_phosphoribosyltr"/>
    <property type="match status" value="1"/>
</dbReference>
<dbReference type="InterPro" id="IPR005764">
    <property type="entry name" value="Ade_phspho_trans"/>
</dbReference>
<dbReference type="InterPro" id="IPR000836">
    <property type="entry name" value="PRibTrfase_dom"/>
</dbReference>
<dbReference type="InterPro" id="IPR029057">
    <property type="entry name" value="PRTase-like"/>
</dbReference>
<dbReference type="InterPro" id="IPR050054">
    <property type="entry name" value="UPRTase/APRTase"/>
</dbReference>
<dbReference type="NCBIfam" id="TIGR01090">
    <property type="entry name" value="apt"/>
    <property type="match status" value="1"/>
</dbReference>
<dbReference type="NCBIfam" id="NF002633">
    <property type="entry name" value="PRK02304.1-2"/>
    <property type="match status" value="1"/>
</dbReference>
<dbReference type="NCBIfam" id="NF002634">
    <property type="entry name" value="PRK02304.1-3"/>
    <property type="match status" value="1"/>
</dbReference>
<dbReference type="NCBIfam" id="NF002636">
    <property type="entry name" value="PRK02304.1-5"/>
    <property type="match status" value="1"/>
</dbReference>
<dbReference type="PANTHER" id="PTHR32315">
    <property type="entry name" value="ADENINE PHOSPHORIBOSYLTRANSFERASE"/>
    <property type="match status" value="1"/>
</dbReference>
<dbReference type="PANTHER" id="PTHR32315:SF3">
    <property type="entry name" value="ADENINE PHOSPHORIBOSYLTRANSFERASE"/>
    <property type="match status" value="1"/>
</dbReference>
<dbReference type="Pfam" id="PF00156">
    <property type="entry name" value="Pribosyltran"/>
    <property type="match status" value="1"/>
</dbReference>
<dbReference type="SUPFAM" id="SSF53271">
    <property type="entry name" value="PRTase-like"/>
    <property type="match status" value="1"/>
</dbReference>
<dbReference type="PROSITE" id="PS00103">
    <property type="entry name" value="PUR_PYR_PR_TRANSFER"/>
    <property type="match status" value="1"/>
</dbReference>
<protein>
    <recommendedName>
        <fullName evidence="1">Adenine phosphoribosyltransferase</fullName>
        <shortName evidence="1">APRT</shortName>
        <ecNumber evidence="1">2.4.2.7</ecNumber>
    </recommendedName>
</protein>
<reference key="1">
    <citation type="journal article" date="2007" name="J. Bacteriol.">
        <title>Complete genome of acute rheumatic fever-associated serotype M5 Streptococcus pyogenes strain Manfredo.</title>
        <authorList>
            <person name="Holden M.T.G."/>
            <person name="Scott A."/>
            <person name="Cherevach I."/>
            <person name="Chillingworth T."/>
            <person name="Churcher C."/>
            <person name="Cronin A."/>
            <person name="Dowd L."/>
            <person name="Feltwell T."/>
            <person name="Hamlin N."/>
            <person name="Holroyd S."/>
            <person name="Jagels K."/>
            <person name="Moule S."/>
            <person name="Mungall K."/>
            <person name="Quail M.A."/>
            <person name="Price C."/>
            <person name="Rabbinowitsch E."/>
            <person name="Sharp S."/>
            <person name="Skelton J."/>
            <person name="Whitehead S."/>
            <person name="Barrell B.G."/>
            <person name="Kehoe M."/>
            <person name="Parkhill J."/>
        </authorList>
    </citation>
    <scope>NUCLEOTIDE SEQUENCE [LARGE SCALE GENOMIC DNA]</scope>
    <source>
        <strain>Manfredo</strain>
    </source>
</reference>
<accession>A2REX9</accession>
<organism>
    <name type="scientific">Streptococcus pyogenes serotype M5 (strain Manfredo)</name>
    <dbReference type="NCBI Taxonomy" id="160491"/>
    <lineage>
        <taxon>Bacteria</taxon>
        <taxon>Bacillati</taxon>
        <taxon>Bacillota</taxon>
        <taxon>Bacilli</taxon>
        <taxon>Lactobacillales</taxon>
        <taxon>Streptococcaceae</taxon>
        <taxon>Streptococcus</taxon>
    </lineage>
</organism>
<feature type="chain" id="PRO_1000000356" description="Adenine phosphoribosyltransferase">
    <location>
        <begin position="1"/>
        <end position="172"/>
    </location>
</feature>
<gene>
    <name evidence="1" type="primary">apt</name>
    <name type="ordered locus">SpyM51079</name>
</gene>
<sequence>MDLTNYIASIKDYPKAGITFRDISPLMADGKAYSYAIREIAQYACDKDIDMVVGPEARGFIIGCPVAVELGIGFAPVRKPGKLPRDVVSADYEKEYGLDTLTMHADAIKPGQRVLIVDDLLATGGTVKATIEMIEKLGGIVAGCAFLIELKGLNGRHAIRNYDYKVLMQFPG</sequence>
<comment type="function">
    <text evidence="1">Catalyzes a salvage reaction resulting in the formation of AMP, that is energically less costly than de novo synthesis.</text>
</comment>
<comment type="catalytic activity">
    <reaction evidence="1">
        <text>AMP + diphosphate = 5-phospho-alpha-D-ribose 1-diphosphate + adenine</text>
        <dbReference type="Rhea" id="RHEA:16609"/>
        <dbReference type="ChEBI" id="CHEBI:16708"/>
        <dbReference type="ChEBI" id="CHEBI:33019"/>
        <dbReference type="ChEBI" id="CHEBI:58017"/>
        <dbReference type="ChEBI" id="CHEBI:456215"/>
        <dbReference type="EC" id="2.4.2.7"/>
    </reaction>
</comment>
<comment type="pathway">
    <text evidence="1">Purine metabolism; AMP biosynthesis via salvage pathway; AMP from adenine: step 1/1.</text>
</comment>
<comment type="subunit">
    <text evidence="1">Homodimer.</text>
</comment>
<comment type="subcellular location">
    <subcellularLocation>
        <location evidence="1">Cytoplasm</location>
    </subcellularLocation>
</comment>
<comment type="similarity">
    <text evidence="1">Belongs to the purine/pyrimidine phosphoribosyltransferase family.</text>
</comment>
<keyword id="KW-0963">Cytoplasm</keyword>
<keyword id="KW-0328">Glycosyltransferase</keyword>
<keyword id="KW-0660">Purine salvage</keyword>
<keyword id="KW-0808">Transferase</keyword>
<proteinExistence type="inferred from homology"/>
<name>APT_STRPG</name>